<gene>
    <name evidence="1" type="primary">groEL1</name>
    <name type="synonym">cpn60</name>
    <name type="synonym">groL</name>
    <name evidence="1" type="synonym">groL1</name>
    <name type="synonym">mopA</name>
    <name type="ordered locus">syc1789_d</name>
</gene>
<dbReference type="EC" id="5.6.1.7" evidence="1"/>
<dbReference type="EMBL" id="AP008231">
    <property type="protein sequence ID" value="BAD79979.1"/>
    <property type="molecule type" value="Genomic_DNA"/>
</dbReference>
<dbReference type="EMBL" id="X05925">
    <property type="protein sequence ID" value="CAA29360.1"/>
    <property type="molecule type" value="Genomic_DNA"/>
</dbReference>
<dbReference type="RefSeq" id="WP_011244099.1">
    <property type="nucleotide sequence ID" value="NZ_CP085785.1"/>
</dbReference>
<dbReference type="SMR" id="P12834"/>
<dbReference type="GeneID" id="72431200"/>
<dbReference type="KEGG" id="syc:syc1789_d"/>
<dbReference type="eggNOG" id="COG0459">
    <property type="taxonomic scope" value="Bacteria"/>
</dbReference>
<dbReference type="PRO" id="PR:P12834"/>
<dbReference type="Proteomes" id="UP000001175">
    <property type="component" value="Chromosome"/>
</dbReference>
<dbReference type="GO" id="GO:0005737">
    <property type="term" value="C:cytoplasm"/>
    <property type="evidence" value="ECO:0007669"/>
    <property type="project" value="UniProtKB-SubCell"/>
</dbReference>
<dbReference type="GO" id="GO:0005524">
    <property type="term" value="F:ATP binding"/>
    <property type="evidence" value="ECO:0007669"/>
    <property type="project" value="UniProtKB-UniRule"/>
</dbReference>
<dbReference type="GO" id="GO:0140662">
    <property type="term" value="F:ATP-dependent protein folding chaperone"/>
    <property type="evidence" value="ECO:0007669"/>
    <property type="project" value="InterPro"/>
</dbReference>
<dbReference type="GO" id="GO:0016853">
    <property type="term" value="F:isomerase activity"/>
    <property type="evidence" value="ECO:0007669"/>
    <property type="project" value="UniProtKB-KW"/>
</dbReference>
<dbReference type="GO" id="GO:0051082">
    <property type="term" value="F:unfolded protein binding"/>
    <property type="evidence" value="ECO:0007669"/>
    <property type="project" value="UniProtKB-UniRule"/>
</dbReference>
<dbReference type="GO" id="GO:0042026">
    <property type="term" value="P:protein refolding"/>
    <property type="evidence" value="ECO:0007669"/>
    <property type="project" value="UniProtKB-UniRule"/>
</dbReference>
<dbReference type="CDD" id="cd03344">
    <property type="entry name" value="GroEL"/>
    <property type="match status" value="1"/>
</dbReference>
<dbReference type="FunFam" id="3.50.7.10:FF:000001">
    <property type="entry name" value="60 kDa chaperonin"/>
    <property type="match status" value="1"/>
</dbReference>
<dbReference type="Gene3D" id="3.50.7.10">
    <property type="entry name" value="GroEL"/>
    <property type="match status" value="1"/>
</dbReference>
<dbReference type="Gene3D" id="1.10.560.10">
    <property type="entry name" value="GroEL-like equatorial domain"/>
    <property type="match status" value="1"/>
</dbReference>
<dbReference type="Gene3D" id="3.30.260.10">
    <property type="entry name" value="TCP-1-like chaperonin intermediate domain"/>
    <property type="match status" value="1"/>
</dbReference>
<dbReference type="HAMAP" id="MF_00600">
    <property type="entry name" value="CH60"/>
    <property type="match status" value="1"/>
</dbReference>
<dbReference type="InterPro" id="IPR018370">
    <property type="entry name" value="Chaperonin_Cpn60_CS"/>
</dbReference>
<dbReference type="InterPro" id="IPR001844">
    <property type="entry name" value="Cpn60/GroEL"/>
</dbReference>
<dbReference type="InterPro" id="IPR002423">
    <property type="entry name" value="Cpn60/GroEL/TCP-1"/>
</dbReference>
<dbReference type="InterPro" id="IPR027409">
    <property type="entry name" value="GroEL-like_apical_dom_sf"/>
</dbReference>
<dbReference type="InterPro" id="IPR027413">
    <property type="entry name" value="GROEL-like_equatorial_sf"/>
</dbReference>
<dbReference type="InterPro" id="IPR027410">
    <property type="entry name" value="TCP-1-like_intermed_sf"/>
</dbReference>
<dbReference type="NCBIfam" id="TIGR02348">
    <property type="entry name" value="GroEL"/>
    <property type="match status" value="1"/>
</dbReference>
<dbReference type="NCBIfam" id="NF000592">
    <property type="entry name" value="PRK00013.1"/>
    <property type="match status" value="1"/>
</dbReference>
<dbReference type="NCBIfam" id="NF009487">
    <property type="entry name" value="PRK12849.1"/>
    <property type="match status" value="1"/>
</dbReference>
<dbReference type="NCBIfam" id="NF009488">
    <property type="entry name" value="PRK12850.1"/>
    <property type="match status" value="1"/>
</dbReference>
<dbReference type="NCBIfam" id="NF009489">
    <property type="entry name" value="PRK12851.1"/>
    <property type="match status" value="1"/>
</dbReference>
<dbReference type="PANTHER" id="PTHR45633">
    <property type="entry name" value="60 KDA HEAT SHOCK PROTEIN, MITOCHONDRIAL"/>
    <property type="match status" value="1"/>
</dbReference>
<dbReference type="Pfam" id="PF00118">
    <property type="entry name" value="Cpn60_TCP1"/>
    <property type="match status" value="1"/>
</dbReference>
<dbReference type="PRINTS" id="PR00298">
    <property type="entry name" value="CHAPERONIN60"/>
</dbReference>
<dbReference type="SUPFAM" id="SSF52029">
    <property type="entry name" value="GroEL apical domain-like"/>
    <property type="match status" value="1"/>
</dbReference>
<dbReference type="SUPFAM" id="SSF48592">
    <property type="entry name" value="GroEL equatorial domain-like"/>
    <property type="match status" value="2"/>
</dbReference>
<dbReference type="PROSITE" id="PS00296">
    <property type="entry name" value="CHAPERONINS_CPN60"/>
    <property type="match status" value="1"/>
</dbReference>
<keyword id="KW-0067">ATP-binding</keyword>
<keyword id="KW-0143">Chaperone</keyword>
<keyword id="KW-0963">Cytoplasm</keyword>
<keyword id="KW-0413">Isomerase</keyword>
<keyword id="KW-0547">Nucleotide-binding</keyword>
<evidence type="ECO:0000255" key="1">
    <source>
        <dbReference type="HAMAP-Rule" id="MF_00600"/>
    </source>
</evidence>
<feature type="chain" id="PRO_0000063567" description="Chaperonin GroEL 1">
    <location>
        <begin position="1"/>
        <end position="544"/>
    </location>
</feature>
<feature type="binding site" evidence="1">
    <location>
        <begin position="29"/>
        <end position="32"/>
    </location>
    <ligand>
        <name>ATP</name>
        <dbReference type="ChEBI" id="CHEBI:30616"/>
    </ligand>
</feature>
<feature type="binding site" evidence="1">
    <location>
        <begin position="86"/>
        <end position="90"/>
    </location>
    <ligand>
        <name>ATP</name>
        <dbReference type="ChEBI" id="CHEBI:30616"/>
    </ligand>
</feature>
<feature type="binding site" evidence="1">
    <location>
        <position position="413"/>
    </location>
    <ligand>
        <name>ATP</name>
        <dbReference type="ChEBI" id="CHEBI:30616"/>
    </ligand>
</feature>
<feature type="binding site" evidence="1">
    <location>
        <position position="495"/>
    </location>
    <ligand>
        <name>ATP</name>
        <dbReference type="ChEBI" id="CHEBI:30616"/>
    </ligand>
</feature>
<accession>P12834</accession>
<accession>Q5N141</accession>
<sequence length="544" mass="57980">MAKRIIYNENARRALEKGIDILAEAVAVTLGPKGRNVVLEKKFGAPQIINDGVTIAKEIELEDHIENTGVALIRQAASKTNDAAGDGTTTATVLAHAVVKEGLRNVAAGANAILLKRGIDKATNFLVEQIKSHARPVEDSKSIAQVGAISAGNDFEVGQMIADAMDKVGKEGVISLEEGKSMTTELEVTEGMRFDKGYISPYFATDTERMEAVFDEPFILITDKKIGLVQDLVPVLEQVARAGRPLVIIAEDIEKEALATLVVNRLRGVLNVAAVKAPGFGDRRKAMLEDIAVLTGGQLITEDAGLKLDTTKLDQLGKARRITITKDNTTIVAEGNEAAVKARVDQIRRQIEETESSYDKEKLQERLAKLSGGVAVVKVGAATETEMKDRKLRLEDAINATKAAVEEGIVPGGGTTLAHLAPQLEEWATANLSGEELTGAQIVARALTAPLKRIAENAGLNGAVISERVKELPFDEGYDASNNQFVNMFTAGIVDPAKVTRSALQNAASIAAMVLTTECIVVDKPEPKEKAPAGAGGGMGDFDY</sequence>
<organism>
    <name type="scientific">Synechococcus sp. (strain ATCC 27144 / PCC 6301 / SAUG 1402/1)</name>
    <name type="common">Anacystis nidulans</name>
    <dbReference type="NCBI Taxonomy" id="269084"/>
    <lineage>
        <taxon>Bacteria</taxon>
        <taxon>Bacillati</taxon>
        <taxon>Cyanobacteriota</taxon>
        <taxon>Cyanophyceae</taxon>
        <taxon>Synechococcales</taxon>
        <taxon>Synechococcaceae</taxon>
        <taxon>Synechococcus</taxon>
    </lineage>
</organism>
<proteinExistence type="inferred from homology"/>
<name>CH601_SYNP6</name>
<reference key="1">
    <citation type="journal article" date="2007" name="Photosyn. Res.">
        <title>Complete nucleotide sequence of the freshwater unicellular cyanobacterium Synechococcus elongatus PCC 6301 chromosome: gene content and organization.</title>
        <authorList>
            <person name="Sugita C."/>
            <person name="Ogata K."/>
            <person name="Shikata M."/>
            <person name="Jikuya H."/>
            <person name="Takano J."/>
            <person name="Furumichi M."/>
            <person name="Kanehisa M."/>
            <person name="Omata T."/>
            <person name="Sugiura M."/>
            <person name="Sugita M."/>
        </authorList>
    </citation>
    <scope>NUCLEOTIDE SEQUENCE [LARGE SCALE GENOMIC DNA]</scope>
    <source>
        <strain>ATCC 27144 / PCC 6301 / SAUG 1402/1</strain>
    </source>
</reference>
<reference key="2">
    <citation type="journal article" date="1987" name="J. Mol. Biol.">
        <title>The organization and sequence of the genes for ATP synthase subunits in the cyanobacterium Synechococcus 6301. Support for an endosymbiotic origin of chloroplasts.</title>
        <authorList>
            <person name="Cozens A.L."/>
            <person name="Walker J.E."/>
        </authorList>
    </citation>
    <scope>NUCLEOTIDE SEQUENCE [GENOMIC DNA] OF 1-300</scope>
</reference>
<reference key="3">
    <citation type="journal article" date="1989" name="Nucleic Acids Res.">
        <title>Identification of two unknown reading frames in Synechococcus 6301 as homologues of the 10k and 65k antigen genes of Mycobacterium tuberculosis and related heat shock genes in E. coli and Coxiella burnetii.</title>
        <authorList>
            <person name="Cookson M.J."/>
            <person name="Baird P.N."/>
            <person name="Hall L.M."/>
            <person name="Coates A.R.M."/>
        </authorList>
    </citation>
    <scope>SIMILARITY TO CHAPERONINS</scope>
</reference>
<comment type="function">
    <text evidence="1">Together with its co-chaperonin GroES, plays an essential role in assisting protein folding. The GroEL-GroES system forms a nano-cage that allows encapsulation of the non-native substrate proteins and provides a physical environment optimized to promote and accelerate protein folding.</text>
</comment>
<comment type="catalytic activity">
    <reaction evidence="1">
        <text>ATP + H2O + a folded polypeptide = ADP + phosphate + an unfolded polypeptide.</text>
        <dbReference type="EC" id="5.6.1.7"/>
    </reaction>
</comment>
<comment type="subunit">
    <text evidence="1">Forms a cylinder of 14 subunits composed of two heptameric rings stacked back-to-back. Interacts with the co-chaperonin GroES.</text>
</comment>
<comment type="subcellular location">
    <subcellularLocation>
        <location evidence="1">Cytoplasm</location>
    </subcellularLocation>
</comment>
<comment type="similarity">
    <text evidence="1">Belongs to the chaperonin (HSP60) family.</text>
</comment>
<protein>
    <recommendedName>
        <fullName evidence="1">Chaperonin GroEL 1</fullName>
        <ecNumber evidence="1">5.6.1.7</ecNumber>
    </recommendedName>
    <alternativeName>
        <fullName evidence="1">60 kDa chaperonin 1</fullName>
    </alternativeName>
    <alternativeName>
        <fullName evidence="1">Chaperonin-60 1</fullName>
        <shortName evidence="1">Cpn60 1</shortName>
    </alternativeName>
</protein>